<proteinExistence type="evidence at protein level"/>
<gene>
    <name evidence="4" type="primary">acb2</name>
    <name evidence="7" type="ORF">PaMx41_ORF24</name>
</gene>
<keyword id="KW-1185">Reference proteome</keyword>
<name>ACB2_BPPP4</name>
<feature type="chain" id="PRO_0000459553" description="Inactive anti-CBASS 2 protein">
    <location>
        <begin position="1"/>
        <end position="36"/>
    </location>
</feature>
<feature type="mutagenesis site" description="No longer sensitive to CBASS type II-A system in host strain." evidence="3">
    <original>I</original>
    <variation>IQDVSDHLRGQYNASLHNRDEITRIANAEPGRWLAIGKTDIQTGMMAIIRTIAQPDSF</variation>
    <location>
        <position position="36"/>
    </location>
</feature>
<sequence length="36" mass="4353">MDNQHKKIKGYRDLSQEEIDMMNRVKELGSQFEKLI</sequence>
<reference evidence="7" key="1">
    <citation type="journal article" date="2016" name="Appl. Environ. Microbiol.">
        <title>Genomic and Transcriptional Mapping of PaMx41, Archetype of a New Lineage of Bacteriophages Infecting Pseudomonas aeruginosa.</title>
        <authorList>
            <person name="Cruz-Plancarte I."/>
            <person name="Cazares A."/>
            <person name="Guarneros G."/>
        </authorList>
    </citation>
    <scope>NUCLEOTIDE SEQUENCE [LARGE SCALE GENOMIC DNA]</scope>
    <scope>DEVELOPMENTAL STAGE</scope>
    <source>
        <strain>PaMx41</strain>
    </source>
</reference>
<reference key="2">
    <citation type="journal article" date="2023" name="Cell">
        <title>Bacteriophages inhibit and evade cGAS-like immune function in bacteria.</title>
        <authorList>
            <person name="Huiting E."/>
            <person name="Cao X."/>
            <person name="Ren J."/>
            <person name="Athukoralage J.S."/>
            <person name="Luo Z."/>
            <person name="Silas S."/>
            <person name="An N."/>
            <person name="Carion H."/>
            <person name="Zhou Y."/>
            <person name="Fraser J.S."/>
            <person name="Feng Y."/>
            <person name="Bondy-Denomy J."/>
        </authorList>
    </citation>
    <scope>FUNCTION</scope>
    <scope>DISRUPTION PHENOTYPE</scope>
    <scope>MUTAGENESIS OF ILE-36</scope>
    <source>
        <strain>PaMx41</strain>
    </source>
</reference>
<dbReference type="EMBL" id="KU884563">
    <property type="protein sequence ID" value="ANA48987.1"/>
    <property type="molecule type" value="Genomic_DNA"/>
</dbReference>
<dbReference type="SMR" id="A0A1C8HQ06"/>
<dbReference type="Proteomes" id="UP000230640">
    <property type="component" value="Genome"/>
</dbReference>
<comment type="function">
    <text evidence="1 3 6">A naturally occurring inactive form of this protein. Upon mutation by a single nucleotide change (changes the stop codon to Gln) inhibits CBASS immunity; most closely related viruses encode a long version of this protein (PubMed:36750095). The long (mutated) version antagonizes the effector protein of host type II-A CBASS immunity by binding the second messenger 3',3'-cyclic GMP-AMP (cGAMP) and sequestering it (thus preventing host CapV activation) without degrading the cyclic nucleotide (Probable) (PubMed:36750095). The mutated version also antagonizes the effector protein of P.aeruginosa type I-A and type I-B CBASS systems (By similarity).</text>
</comment>
<comment type="developmental stage">
    <text evidence="2">A middle gene transcribed by 30 minutes in the virus life cycle, RNA is still detectable as cell lysis begins at 75 minutes (PubMed:27590812).</text>
</comment>
<comment type="disruption phenotype">
    <text evidence="3">No change in virus replication in host (strain Pa011) (PubMed:36750095).</text>
</comment>
<comment type="similarity">
    <text evidence="5">Belongs to the Acb2 family.</text>
</comment>
<evidence type="ECO:0000250" key="1">
    <source>
        <dbReference type="UniProtKB" id="A0A1C8HPQ3"/>
    </source>
</evidence>
<evidence type="ECO:0000269" key="2">
    <source>
    </source>
</evidence>
<evidence type="ECO:0000269" key="3">
    <source>
    </source>
</evidence>
<evidence type="ECO:0000303" key="4">
    <source>
    </source>
</evidence>
<evidence type="ECO:0000305" key="5"/>
<evidence type="ECO:0000305" key="6">
    <source>
    </source>
</evidence>
<evidence type="ECO:0000312" key="7">
    <source>
        <dbReference type="EMBL" id="ANA48987.1"/>
    </source>
</evidence>
<accession>A0A1C8HQ06</accession>
<organism>
    <name type="scientific">Pseudomonas phage PaMx41</name>
    <dbReference type="NCBI Taxonomy" id="1815976"/>
    <lineage>
        <taxon>Viruses</taxon>
        <taxon>Duplodnaviria</taxon>
        <taxon>Heunggongvirae</taxon>
        <taxon>Uroviricota</taxon>
        <taxon>Caudoviricetes</taxon>
        <taxon>Fredfastierviridae</taxon>
        <taxon>Jamesmcgillvirus</taxon>
        <taxon>Jamesmcgillvirus PaMx41</taxon>
    </lineage>
</organism>
<protein>
    <recommendedName>
        <fullName evidence="4">Inactive anti-CBASS 2 protein</fullName>
        <shortName evidence="4">Acb2</shortName>
    </recommendedName>
</protein>